<organism>
    <name type="scientific">Danio rerio</name>
    <name type="common">Zebrafish</name>
    <name type="synonym">Brachydanio rerio</name>
    <dbReference type="NCBI Taxonomy" id="7955"/>
    <lineage>
        <taxon>Eukaryota</taxon>
        <taxon>Metazoa</taxon>
        <taxon>Chordata</taxon>
        <taxon>Craniata</taxon>
        <taxon>Vertebrata</taxon>
        <taxon>Euteleostomi</taxon>
        <taxon>Actinopterygii</taxon>
        <taxon>Neopterygii</taxon>
        <taxon>Teleostei</taxon>
        <taxon>Ostariophysi</taxon>
        <taxon>Cypriniformes</taxon>
        <taxon>Danionidae</taxon>
        <taxon>Danioninae</taxon>
        <taxon>Danio</taxon>
    </lineage>
</organism>
<evidence type="ECO:0000250" key="1">
    <source>
        <dbReference type="UniProtKB" id="Q9Y5Z9"/>
    </source>
</evidence>
<evidence type="ECO:0000255" key="2"/>
<evidence type="ECO:0000256" key="3">
    <source>
        <dbReference type="SAM" id="MobiDB-lite"/>
    </source>
</evidence>
<evidence type="ECO:0000269" key="4">
    <source>
    </source>
</evidence>
<evidence type="ECO:0000269" key="5">
    <source>
    </source>
</evidence>
<evidence type="ECO:0000303" key="6">
    <source>
    </source>
</evidence>
<evidence type="ECO:0000303" key="7">
    <source>
    </source>
</evidence>
<evidence type="ECO:0000305" key="8"/>
<feature type="chain" id="PRO_0000422598" description="UbiA prenyltransferase domain-containing protein 1">
    <location>
        <begin position="1"/>
        <end position="336"/>
    </location>
</feature>
<feature type="transmembrane region" description="Helical" evidence="2">
    <location>
        <begin position="79"/>
        <end position="99"/>
    </location>
</feature>
<feature type="transmembrane region" description="Helical" evidence="2">
    <location>
        <begin position="129"/>
        <end position="149"/>
    </location>
</feature>
<feature type="transmembrane region" description="Helical" evidence="2">
    <location>
        <begin position="158"/>
        <end position="178"/>
    </location>
</feature>
<feature type="transmembrane region" description="Helical" evidence="2">
    <location>
        <begin position="180"/>
        <end position="200"/>
    </location>
</feature>
<feature type="transmembrane region" description="Helical" evidence="2">
    <location>
        <begin position="201"/>
        <end position="221"/>
    </location>
</feature>
<feature type="transmembrane region" description="Helical" evidence="2">
    <location>
        <begin position="254"/>
        <end position="274"/>
    </location>
</feature>
<feature type="transmembrane region" description="Helical" evidence="2">
    <location>
        <begin position="315"/>
        <end position="335"/>
    </location>
</feature>
<feature type="region of interest" description="Disordered" evidence="3">
    <location>
        <begin position="1"/>
        <end position="22"/>
    </location>
</feature>
<feature type="compositionally biased region" description="Low complexity" evidence="3">
    <location>
        <begin position="7"/>
        <end position="22"/>
    </location>
</feature>
<feature type="mutagenesis site" description="In reh(S587); cranial vascular hemmorhages in multiple areas of the head, leading to death by 72 hpf." evidence="5">
    <original>L</original>
    <variation>Q</variation>
    <location>
        <position position="65"/>
    </location>
</feature>
<feature type="mutagenesis site" description="In bar(S847); increased oxidative stress, DNA damage and cell death specifically in blood vessels and the heart." evidence="4">
    <original>L</original>
    <variation>Q</variation>
    <location>
        <position position="82"/>
    </location>
</feature>
<name>UBIA1_DANRE</name>
<sequence length="336" mass="36214">MQEMKPAALSGSNGLNGASGSSVRVPCSRLSRAGRMALDLQSKCAAYVLALRPWSFSASLTPVALGSALAYKLEGSVDLLLLLVCAVAVLLVHGAGNLVNTYYDFSKGIDHKKSDDRTLVDQILKPQDVVMFGAVLYSAGCLCATLLYFLSSLKLEHLALIYFGGLSSSFLYTGGIGLKYVALGDVVILITFGPLAVMFAHAVQVGYLSVLPLVYAVPLALNTEAILHSNNTRDMDSDKQAGIVTLAILLGPTLSYVIYNLLLFVPYLLFCILATRYTISMALPLLTLPMAFPLERQFRCRCYAKIPQKTAKLNLLMGLFYVFGIILAPQGSLPLL</sequence>
<keyword id="KW-0256">Endoplasmic reticulum</keyword>
<keyword id="KW-0333">Golgi apparatus</keyword>
<keyword id="KW-0472">Membrane</keyword>
<keyword id="KW-0474">Menaquinone biosynthesis</keyword>
<keyword id="KW-0496">Mitochondrion</keyword>
<keyword id="KW-0637">Prenyltransferase</keyword>
<keyword id="KW-1185">Reference proteome</keyword>
<keyword id="KW-0808">Transferase</keyword>
<keyword id="KW-0812">Transmembrane</keyword>
<keyword id="KW-1133">Transmembrane helix</keyword>
<keyword id="KW-0831">Ubiquinone biosynthesis</keyword>
<protein>
    <recommendedName>
        <fullName>UbiA prenyltransferase domain-containing protein 1</fullName>
        <ecNumber evidence="1">2.5.1.-</ecNumber>
        <ecNumber evidence="4">2.5.1.39</ecNumber>
    </recommendedName>
    <alternativeName>
        <fullName evidence="6">Protein barolo</fullName>
    </alternativeName>
    <alternativeName>
        <fullName evidence="7">Protein reddish</fullName>
    </alternativeName>
</protein>
<reference key="1">
    <citation type="journal article" date="2013" name="Nature">
        <title>The zebrafish reference genome sequence and its relationship to the human genome.</title>
        <authorList>
            <person name="Howe K."/>
            <person name="Clark M.D."/>
            <person name="Torroja C.F."/>
            <person name="Torrance J."/>
            <person name="Berthelot C."/>
            <person name="Muffato M."/>
            <person name="Collins J.E."/>
            <person name="Humphray S."/>
            <person name="McLaren K."/>
            <person name="Matthews L."/>
            <person name="McLaren S."/>
            <person name="Sealy I."/>
            <person name="Caccamo M."/>
            <person name="Churcher C."/>
            <person name="Scott C."/>
            <person name="Barrett J.C."/>
            <person name="Koch R."/>
            <person name="Rauch G.J."/>
            <person name="White S."/>
            <person name="Chow W."/>
            <person name="Kilian B."/>
            <person name="Quintais L.T."/>
            <person name="Guerra-Assuncao J.A."/>
            <person name="Zhou Y."/>
            <person name="Gu Y."/>
            <person name="Yen J."/>
            <person name="Vogel J.H."/>
            <person name="Eyre T."/>
            <person name="Redmond S."/>
            <person name="Banerjee R."/>
            <person name="Chi J."/>
            <person name="Fu B."/>
            <person name="Langley E."/>
            <person name="Maguire S.F."/>
            <person name="Laird G.K."/>
            <person name="Lloyd D."/>
            <person name="Kenyon E."/>
            <person name="Donaldson S."/>
            <person name="Sehra H."/>
            <person name="Almeida-King J."/>
            <person name="Loveland J."/>
            <person name="Trevanion S."/>
            <person name="Jones M."/>
            <person name="Quail M."/>
            <person name="Willey D."/>
            <person name="Hunt A."/>
            <person name="Burton J."/>
            <person name="Sims S."/>
            <person name="McLay K."/>
            <person name="Plumb B."/>
            <person name="Davis J."/>
            <person name="Clee C."/>
            <person name="Oliver K."/>
            <person name="Clark R."/>
            <person name="Riddle C."/>
            <person name="Elliot D."/>
            <person name="Threadgold G."/>
            <person name="Harden G."/>
            <person name="Ware D."/>
            <person name="Begum S."/>
            <person name="Mortimore B."/>
            <person name="Kerry G."/>
            <person name="Heath P."/>
            <person name="Phillimore B."/>
            <person name="Tracey A."/>
            <person name="Corby N."/>
            <person name="Dunn M."/>
            <person name="Johnson C."/>
            <person name="Wood J."/>
            <person name="Clark S."/>
            <person name="Pelan S."/>
            <person name="Griffiths G."/>
            <person name="Smith M."/>
            <person name="Glithero R."/>
            <person name="Howden P."/>
            <person name="Barker N."/>
            <person name="Lloyd C."/>
            <person name="Stevens C."/>
            <person name="Harley J."/>
            <person name="Holt K."/>
            <person name="Panagiotidis G."/>
            <person name="Lovell J."/>
            <person name="Beasley H."/>
            <person name="Henderson C."/>
            <person name="Gordon D."/>
            <person name="Auger K."/>
            <person name="Wright D."/>
            <person name="Collins J."/>
            <person name="Raisen C."/>
            <person name="Dyer L."/>
            <person name="Leung K."/>
            <person name="Robertson L."/>
            <person name="Ambridge K."/>
            <person name="Leongamornlert D."/>
            <person name="McGuire S."/>
            <person name="Gilderthorp R."/>
            <person name="Griffiths C."/>
            <person name="Manthravadi D."/>
            <person name="Nichol S."/>
            <person name="Barker G."/>
            <person name="Whitehead S."/>
            <person name="Kay M."/>
            <person name="Brown J."/>
            <person name="Murnane C."/>
            <person name="Gray E."/>
            <person name="Humphries M."/>
            <person name="Sycamore N."/>
            <person name="Barker D."/>
            <person name="Saunders D."/>
            <person name="Wallis J."/>
            <person name="Babbage A."/>
            <person name="Hammond S."/>
            <person name="Mashreghi-Mohammadi M."/>
            <person name="Barr L."/>
            <person name="Martin S."/>
            <person name="Wray P."/>
            <person name="Ellington A."/>
            <person name="Matthews N."/>
            <person name="Ellwood M."/>
            <person name="Woodmansey R."/>
            <person name="Clark G."/>
            <person name="Cooper J."/>
            <person name="Tromans A."/>
            <person name="Grafham D."/>
            <person name="Skuce C."/>
            <person name="Pandian R."/>
            <person name="Andrews R."/>
            <person name="Harrison E."/>
            <person name="Kimberley A."/>
            <person name="Garnett J."/>
            <person name="Fosker N."/>
            <person name="Hall R."/>
            <person name="Garner P."/>
            <person name="Kelly D."/>
            <person name="Bird C."/>
            <person name="Palmer S."/>
            <person name="Gehring I."/>
            <person name="Berger A."/>
            <person name="Dooley C.M."/>
            <person name="Ersan-Urun Z."/>
            <person name="Eser C."/>
            <person name="Geiger H."/>
            <person name="Geisler M."/>
            <person name="Karotki L."/>
            <person name="Kirn A."/>
            <person name="Konantz J."/>
            <person name="Konantz M."/>
            <person name="Oberlander M."/>
            <person name="Rudolph-Geiger S."/>
            <person name="Teucke M."/>
            <person name="Lanz C."/>
            <person name="Raddatz G."/>
            <person name="Osoegawa K."/>
            <person name="Zhu B."/>
            <person name="Rapp A."/>
            <person name="Widaa S."/>
            <person name="Langford C."/>
            <person name="Yang F."/>
            <person name="Schuster S.C."/>
            <person name="Carter N.P."/>
            <person name="Harrow J."/>
            <person name="Ning Z."/>
            <person name="Herrero J."/>
            <person name="Searle S.M."/>
            <person name="Enright A."/>
            <person name="Geisler R."/>
            <person name="Plasterk R.H."/>
            <person name="Lee C."/>
            <person name="Westerfield M."/>
            <person name="de Jong P.J."/>
            <person name="Zon L.I."/>
            <person name="Postlethwait J.H."/>
            <person name="Nusslein-Volhard C."/>
            <person name="Hubbard T.J."/>
            <person name="Roest Crollius H."/>
            <person name="Rogers J."/>
            <person name="Stemple D.L."/>
        </authorList>
    </citation>
    <scope>NUCLEOTIDE SEQUENCE [LARGE SCALE GENOMIC DNA]</scope>
    <source>
        <strain>Tuebingen</strain>
    </source>
</reference>
<reference key="2">
    <citation type="journal article" date="2013" name="Cell">
        <title>Ubiad1 is an antioxidant enzyme that regulates eNOS activity by CoQ10 synthesis.</title>
        <authorList>
            <person name="Mugoni V."/>
            <person name="Postel R."/>
            <person name="Catanzaro V."/>
            <person name="De Luca E."/>
            <person name="Turco E."/>
            <person name="Digilio G."/>
            <person name="Silengo L."/>
            <person name="Murphy M.P."/>
            <person name="Medana C."/>
            <person name="Stainier D.Y."/>
            <person name="Bakkers J."/>
            <person name="Santoro M.M."/>
        </authorList>
    </citation>
    <scope>FUNCTION</scope>
    <scope>CATALYTIC ACTIVITY</scope>
    <scope>SUBCELLULAR LOCATION</scope>
    <scope>DEVELOPMENTAL STAGE</scope>
    <scope>DISRUPTION PHENOTYPE</scope>
    <scope>MUTAGENESIS OF LEU-82</scope>
</reference>
<reference key="3">
    <citation type="journal article" date="2013" name="Development">
        <title>UBIAD1-mediated vitamin K2 synthesis is required for vascular endothelial cell survival and development.</title>
        <authorList>
            <person name="Hegarty J.M."/>
            <person name="Yang H."/>
            <person name="Chi N.C."/>
        </authorList>
    </citation>
    <scope>FUNCTION</scope>
    <scope>DISRUPTION PHENOTYPE</scope>
    <scope>MUTAGENESIS OF LEU-65</scope>
</reference>
<gene>
    <name type="primary">ubiad1</name>
    <name evidence="6" type="synonym">bar</name>
    <name evidence="7" type="synonym">reh</name>
</gene>
<accession>E7FB98</accession>
<dbReference type="EC" id="2.5.1.-" evidence="1"/>
<dbReference type="EC" id="2.5.1.39" evidence="4"/>
<dbReference type="EMBL" id="CABZ01068151">
    <property type="status" value="NOT_ANNOTATED_CDS"/>
    <property type="molecule type" value="Genomic_DNA"/>
</dbReference>
<dbReference type="RefSeq" id="NP_001186655.1">
    <property type="nucleotide sequence ID" value="NM_001199726.3"/>
</dbReference>
<dbReference type="SMR" id="E7FB98"/>
<dbReference type="FunCoup" id="E7FB98">
    <property type="interactions" value="446"/>
</dbReference>
<dbReference type="STRING" id="7955.ENSDARP00000012519"/>
<dbReference type="PaxDb" id="7955-ENSDARP00000012519"/>
<dbReference type="Ensembl" id="ENSDART00000015554">
    <property type="protein sequence ID" value="ENSDARP00000012519"/>
    <property type="gene ID" value="ENSDARG00000013009"/>
</dbReference>
<dbReference type="GeneID" id="558410"/>
<dbReference type="KEGG" id="dre:558410"/>
<dbReference type="AGR" id="ZFIN:ZDB-GENE-030131-3205"/>
<dbReference type="CTD" id="29914"/>
<dbReference type="ZFIN" id="ZDB-GENE-030131-3205">
    <property type="gene designation" value="ubiad1"/>
</dbReference>
<dbReference type="eggNOG" id="KOG4581">
    <property type="taxonomic scope" value="Eukaryota"/>
</dbReference>
<dbReference type="HOGENOM" id="CLU_043611_0_0_1"/>
<dbReference type="InParanoid" id="E7FB98"/>
<dbReference type="OMA" id="QWIEGAR"/>
<dbReference type="OrthoDB" id="203513at2759"/>
<dbReference type="PhylomeDB" id="E7FB98"/>
<dbReference type="TreeFam" id="TF323238"/>
<dbReference type="Reactome" id="R-DRE-6806664">
    <property type="pathway name" value="Metabolism of vitamin K"/>
</dbReference>
<dbReference type="UniPathway" id="UPA00079"/>
<dbReference type="UniPathway" id="UPA00232"/>
<dbReference type="PRO" id="PR:E7FB98"/>
<dbReference type="Proteomes" id="UP000000437">
    <property type="component" value="Chromosome 8"/>
</dbReference>
<dbReference type="Bgee" id="ENSDARG00000013009">
    <property type="expression patterns" value="Expressed in somite and 25 other cell types or tissues"/>
</dbReference>
<dbReference type="GO" id="GO:0005783">
    <property type="term" value="C:endoplasmic reticulum"/>
    <property type="evidence" value="ECO:0000318"/>
    <property type="project" value="GO_Central"/>
</dbReference>
<dbReference type="GO" id="GO:0005789">
    <property type="term" value="C:endoplasmic reticulum membrane"/>
    <property type="evidence" value="ECO:0007669"/>
    <property type="project" value="UniProtKB-SubCell"/>
</dbReference>
<dbReference type="GO" id="GO:0005794">
    <property type="term" value="C:Golgi apparatus"/>
    <property type="evidence" value="ECO:0000314"/>
    <property type="project" value="ZFIN"/>
</dbReference>
<dbReference type="GO" id="GO:0000139">
    <property type="term" value="C:Golgi membrane"/>
    <property type="evidence" value="ECO:0000314"/>
    <property type="project" value="UniProtKB"/>
</dbReference>
<dbReference type="GO" id="GO:0031966">
    <property type="term" value="C:mitochondrial membrane"/>
    <property type="evidence" value="ECO:0007669"/>
    <property type="project" value="UniProtKB-SubCell"/>
</dbReference>
<dbReference type="GO" id="GO:0016209">
    <property type="term" value="F:antioxidant activity"/>
    <property type="evidence" value="ECO:0000315"/>
    <property type="project" value="UniProtKB"/>
</dbReference>
<dbReference type="GO" id="GO:0004517">
    <property type="term" value="F:nitric-oxide synthase activity"/>
    <property type="evidence" value="ECO:0000316"/>
    <property type="project" value="ZFIN"/>
</dbReference>
<dbReference type="GO" id="GO:0004659">
    <property type="term" value="F:prenyltransferase activity"/>
    <property type="evidence" value="ECO:0000314"/>
    <property type="project" value="UniProtKB"/>
</dbReference>
<dbReference type="GO" id="GO:0071498">
    <property type="term" value="P:cellular response to fluid shear stress"/>
    <property type="evidence" value="ECO:0000316"/>
    <property type="project" value="ZFIN"/>
</dbReference>
<dbReference type="GO" id="GO:0072359">
    <property type="term" value="P:circulatory system development"/>
    <property type="evidence" value="ECO:0000315"/>
    <property type="project" value="UniProtKB"/>
</dbReference>
<dbReference type="GO" id="GO:0001885">
    <property type="term" value="P:endothelial cell development"/>
    <property type="evidence" value="ECO:0000315"/>
    <property type="project" value="UniProtKB"/>
</dbReference>
<dbReference type="GO" id="GO:0009234">
    <property type="term" value="P:menaquinone biosynthetic process"/>
    <property type="evidence" value="ECO:0000315"/>
    <property type="project" value="UniProtKB"/>
</dbReference>
<dbReference type="GO" id="GO:0006744">
    <property type="term" value="P:ubiquinone biosynthetic process"/>
    <property type="evidence" value="ECO:0000315"/>
    <property type="project" value="UniProtKB"/>
</dbReference>
<dbReference type="GO" id="GO:0042371">
    <property type="term" value="P:vitamin K biosynthetic process"/>
    <property type="evidence" value="ECO:0000315"/>
    <property type="project" value="UniProtKB"/>
</dbReference>
<dbReference type="CDD" id="cd13962">
    <property type="entry name" value="PT_UbiA_UBIAD1"/>
    <property type="match status" value="1"/>
</dbReference>
<dbReference type="FunFam" id="1.10.357.140:FF:000005">
    <property type="entry name" value="UbiA prenyltransferase domain-containing protein 1"/>
    <property type="match status" value="1"/>
</dbReference>
<dbReference type="Gene3D" id="1.10.357.140">
    <property type="entry name" value="UbiA prenyltransferase"/>
    <property type="match status" value="1"/>
</dbReference>
<dbReference type="InterPro" id="IPR000537">
    <property type="entry name" value="UbiA_prenyltransferase"/>
</dbReference>
<dbReference type="InterPro" id="IPR044878">
    <property type="entry name" value="UbiA_sf"/>
</dbReference>
<dbReference type="InterPro" id="IPR026046">
    <property type="entry name" value="UBIAD1"/>
</dbReference>
<dbReference type="PANTHER" id="PTHR13929">
    <property type="entry name" value="1,4-DIHYDROXY-2-NAPHTHOATE OCTAPRENYLTRANSFERASE"/>
    <property type="match status" value="1"/>
</dbReference>
<dbReference type="PANTHER" id="PTHR13929:SF0">
    <property type="entry name" value="UBIA PRENYLTRANSFERASE DOMAIN-CONTAINING PROTEIN 1"/>
    <property type="match status" value="1"/>
</dbReference>
<dbReference type="Pfam" id="PF01040">
    <property type="entry name" value="UbiA"/>
    <property type="match status" value="1"/>
</dbReference>
<dbReference type="PIRSF" id="PIRSF005355">
    <property type="entry name" value="UBIAD1"/>
    <property type="match status" value="1"/>
</dbReference>
<proteinExistence type="evidence at protein level"/>
<comment type="function">
    <text evidence="1 4 5">Prenyltransferase that mediates the formation of menaquinone-4 (MK-4) and coenzyme Q10 (PubMed:23374346). MK-4 is a vitamin K2 isoform required for endothelial cell development (By similarity). Mediates the conversion of phylloquinone (PK) into MK-4, probably by cleaving the side chain of phylloquinone (PK) to release 2-methyl-1,4-naphthoquinone (menadione; K3) and then prenylating it with geranylgeranyl pyrophosphate (GGPP) to form MK-4 (By similarity). Also plays a role in cardiovascular development independently of MK-4 biosynthesis, by acting as a coenzyme Q10 biosynthetic enzyme: coenzyme Q10, also named ubiquinone, plays an important antioxidant role in the cardiovascular system (PubMed:23374346). Mediates biosynthesis of coenzyme Q10 in the Golgi membrane, leading to protect cardiovascular tissues from nos3/eNOS-dependent oxidative stress (PubMed:23533172).</text>
</comment>
<comment type="catalytic activity">
    <reaction evidence="1">
        <text>menadiol + (2E,6E,10E)-geranylgeranyl diphosphate = menaquinol-4 + diphosphate</text>
        <dbReference type="Rhea" id="RHEA:74083"/>
        <dbReference type="ChEBI" id="CHEBI:6746"/>
        <dbReference type="ChEBI" id="CHEBI:33019"/>
        <dbReference type="ChEBI" id="CHEBI:58756"/>
        <dbReference type="ChEBI" id="CHEBI:193091"/>
    </reaction>
    <physiologicalReaction direction="left-to-right" evidence="1">
        <dbReference type="Rhea" id="RHEA:74084"/>
    </physiologicalReaction>
</comment>
<comment type="catalytic activity">
    <reaction evidence="4">
        <text>all-trans-decaprenyl diphosphate + 4-hydroxybenzoate = 4-hydroxy-3-(all-trans-decaprenyl)benzoate + diphosphate</text>
        <dbReference type="Rhea" id="RHEA:44564"/>
        <dbReference type="ChEBI" id="CHEBI:17879"/>
        <dbReference type="ChEBI" id="CHEBI:33019"/>
        <dbReference type="ChEBI" id="CHEBI:60721"/>
        <dbReference type="ChEBI" id="CHEBI:84503"/>
        <dbReference type="EC" id="2.5.1.39"/>
    </reaction>
    <physiologicalReaction direction="left-to-right" evidence="4">
        <dbReference type="Rhea" id="RHEA:44565"/>
    </physiologicalReaction>
</comment>
<comment type="pathway">
    <text evidence="1">Quinol/quinone metabolism; menaquinone biosynthesis.</text>
</comment>
<comment type="pathway">
    <text evidence="1">Cofactor biosynthesis; ubiquinone biosynthesis.</text>
</comment>
<comment type="subcellular location">
    <subcellularLocation>
        <location evidence="1">Endoplasmic reticulum membrane</location>
        <topology evidence="2">Multi-pass membrane protein</topology>
    </subcellularLocation>
    <subcellularLocation>
        <location evidence="4">Golgi apparatus membrane</location>
        <topology evidence="2">Multi-pass membrane protein</topology>
    </subcellularLocation>
    <subcellularLocation>
        <location evidence="1">Mitochondrion membrane</location>
        <topology evidence="2">Multi-pass membrane protein</topology>
    </subcellularLocation>
</comment>
<comment type="developmental stage">
    <text evidence="4">Ubiquitous expression at 24 hours post fertilization (hpf) in addition to a distinct expression in the heart at 48 hpf.</text>
</comment>
<comment type="disruption phenotype">
    <text evidence="4 5">Cranial vascular hemorrhages and pericardial edema, leading to complete cardiac and vascular organ failure by 72 hpf. Defects are due to increased oxidative stress.</text>
</comment>
<comment type="similarity">
    <text evidence="8">Belongs to the UbiA prenyltransferase family.</text>
</comment>